<gene>
    <name type="primary">COX7A2</name>
    <name type="synonym">COX7AL</name>
</gene>
<protein>
    <recommendedName>
        <fullName>Cytochrome c oxidase subunit 7A2, mitochondrial</fullName>
    </recommendedName>
    <alternativeName>
        <fullName>Cytochrome c oxidase subunit VIIa-liver/heart</fullName>
        <shortName>Cytochrome c oxidase subunit VIIa-L</shortName>
    </alternativeName>
</protein>
<evidence type="ECO:0000250" key="1">
    <source>
        <dbReference type="UniProtKB" id="P10174"/>
    </source>
</evidence>
<evidence type="ECO:0000250" key="2">
    <source>
        <dbReference type="UniProtKB" id="P14406"/>
    </source>
</evidence>
<evidence type="ECO:0000250" key="3">
    <source>
        <dbReference type="UniProtKB" id="P48771"/>
    </source>
</evidence>
<evidence type="ECO:0000256" key="4">
    <source>
        <dbReference type="SAM" id="MobiDB-lite"/>
    </source>
</evidence>
<evidence type="ECO:0000305" key="5"/>
<accession>Q9TR30</accession>
<sequence length="24" mass="2795">FENKVPEKQKLFQEDNGIPVHLKG</sequence>
<reference key="1">
    <citation type="journal article" date="1995" name="Comp. Biochem. Physiol.">
        <title>Species-specific expression of cytochrome c oxidase isozymes.</title>
        <authorList>
            <person name="Linder D."/>
            <person name="Freund R."/>
            <person name="Kadenbach B."/>
        </authorList>
    </citation>
    <scope>PROTEIN SEQUENCE</scope>
    <source>
        <tissue>Heart</tissue>
        <tissue>Liver</tissue>
    </source>
</reference>
<proteinExistence type="evidence at protein level"/>
<organism>
    <name type="scientific">Ovis aries</name>
    <name type="common">Sheep</name>
    <dbReference type="NCBI Taxonomy" id="9940"/>
    <lineage>
        <taxon>Eukaryota</taxon>
        <taxon>Metazoa</taxon>
        <taxon>Chordata</taxon>
        <taxon>Craniata</taxon>
        <taxon>Vertebrata</taxon>
        <taxon>Euteleostomi</taxon>
        <taxon>Mammalia</taxon>
        <taxon>Eutheria</taxon>
        <taxon>Laurasiatheria</taxon>
        <taxon>Artiodactyla</taxon>
        <taxon>Ruminantia</taxon>
        <taxon>Pecora</taxon>
        <taxon>Bovidae</taxon>
        <taxon>Caprinae</taxon>
        <taxon>Ovis</taxon>
    </lineage>
</organism>
<keyword id="KW-0007">Acetylation</keyword>
<keyword id="KW-0903">Direct protein sequencing</keyword>
<keyword id="KW-0472">Membrane</keyword>
<keyword id="KW-0496">Mitochondrion</keyword>
<keyword id="KW-0999">Mitochondrion inner membrane</keyword>
<keyword id="KW-0560">Oxidoreductase</keyword>
<keyword id="KW-1185">Reference proteome</keyword>
<keyword id="KW-0812">Transmembrane</keyword>
<keyword id="KW-1133">Transmembrane helix</keyword>
<name>CX7A2_SHEEP</name>
<comment type="function">
    <text evidence="1">Component of the cytochrome c oxidase, the last enzyme in the mitochondrial electron transport chain which drives oxidative phosphorylation. The respiratory chain contains 3 multisubunit complexes succinate dehydrogenase (complex II, CII), ubiquinol-cytochrome c oxidoreductase (cytochrome b-c1 complex, complex III, CIII) and cytochrome c oxidase (complex IV, CIV), that cooperate to transfer electrons derived from NADH and succinate to molecular oxygen, creating an electrochemical gradient over the inner membrane that drives transmembrane transport and the ATP synthase. Cytochrome c oxidase is the component of the respiratory chain that catalyzes the reduction of oxygen to water. Electrons originating from reduced cytochrome c in the intermembrane space (IMS) are transferred via the dinuclear copper A center (CU(A)) of subunit 2 and heme A of subunit 1 to the active site in subunit 1, a binuclear center (BNC) formed by heme A3 and copper B (CU(B)). The BNC reduces molecular oxygen to 2 water molecules using 4 electrons from cytochrome c in the IMS and 4 protons from the mitochondrial matrix.</text>
</comment>
<comment type="pathway">
    <text evidence="1">Energy metabolism; oxidative phosphorylation.</text>
</comment>
<comment type="subunit">
    <text evidence="2">Component of the cytochrome c oxidase (complex IV, CIV), a multisubunit enzyme composed of 14 subunits. The complex is composed of a catalytic core of 3 subunits MT-CO1, MT-CO2 and MT-CO3, encoded in the mitochondrial DNA, and 11 supernumerary subunits COX4I, COX5A, COX5B, COX6A, COX6B, COX6C, COX7A, COX7B, COX7C, COX8 and NDUFA4, which are encoded in the nuclear genome. The complex exists as a monomer or a dimer and forms supercomplexes (SCs) in the inner mitochondrial membrane with NADH-ubiquinone oxidoreductase (complex I, CI) and ubiquinol-cytochrome c oxidoreductase (cytochrome b-c1 complex, complex III, CIII), resulting in different assemblies (supercomplex SCI(1)III(2)IV(1) and megacomplex MCI(2)III(2)IV(2)). Interacts with PET100.</text>
</comment>
<comment type="subcellular location">
    <subcellularLocation>
        <location evidence="2">Mitochondrion inner membrane</location>
        <topology evidence="2">Single-pass membrane protein</topology>
    </subcellularLocation>
</comment>
<comment type="similarity">
    <text evidence="5">Belongs to the cytochrome c oxidase VIIa family.</text>
</comment>
<feature type="chain" id="PRO_0000220999" description="Cytochrome c oxidase subunit 7A2, mitochondrial">
    <location>
        <begin position="1"/>
        <end position="24" status="greater than"/>
    </location>
</feature>
<feature type="region of interest" description="Disordered" evidence="4">
    <location>
        <begin position="1"/>
        <end position="24"/>
    </location>
</feature>
<feature type="compositionally biased region" description="Basic and acidic residues" evidence="4">
    <location>
        <begin position="1"/>
        <end position="13"/>
    </location>
</feature>
<feature type="modified residue" description="N6-acetyllysine" evidence="3">
    <location>
        <position position="10"/>
    </location>
</feature>
<feature type="non-terminal residue">
    <location>
        <position position="24"/>
    </location>
</feature>
<dbReference type="STRING" id="9940.ENSOARP00000011992"/>
<dbReference type="PaxDb" id="9940-ENSOARP00000011992"/>
<dbReference type="eggNOG" id="ENOG502S4DT">
    <property type="taxonomic scope" value="Eukaryota"/>
</dbReference>
<dbReference type="UniPathway" id="UPA00705"/>
<dbReference type="Proteomes" id="UP000002356">
    <property type="component" value="Unplaced"/>
</dbReference>
<dbReference type="GO" id="GO:0005743">
    <property type="term" value="C:mitochondrial inner membrane"/>
    <property type="evidence" value="ECO:0007669"/>
    <property type="project" value="UniProtKB-SubCell"/>
</dbReference>
<dbReference type="GO" id="GO:0045277">
    <property type="term" value="C:respiratory chain complex IV"/>
    <property type="evidence" value="ECO:0007669"/>
    <property type="project" value="InterPro"/>
</dbReference>
<dbReference type="GO" id="GO:0016491">
    <property type="term" value="F:oxidoreductase activity"/>
    <property type="evidence" value="ECO:0007669"/>
    <property type="project" value="UniProtKB-KW"/>
</dbReference>
<dbReference type="GO" id="GO:0006123">
    <property type="term" value="P:mitochondrial electron transport, cytochrome c to oxygen"/>
    <property type="evidence" value="ECO:0007669"/>
    <property type="project" value="InterPro"/>
</dbReference>
<dbReference type="Gene3D" id="4.10.91.10">
    <property type="entry name" value="Cytochrome c oxidase, subunit VIIa"/>
    <property type="match status" value="1"/>
</dbReference>
<dbReference type="InterPro" id="IPR039297">
    <property type="entry name" value="COX7a"/>
</dbReference>
<dbReference type="InterPro" id="IPR036539">
    <property type="entry name" value="Cyt_c_oxidase_su7a_sf"/>
</dbReference>
<dbReference type="Pfam" id="PF02238">
    <property type="entry name" value="COX7a"/>
    <property type="match status" value="1"/>
</dbReference>
<dbReference type="SUPFAM" id="SSF81419">
    <property type="entry name" value="Mitochondrial cytochrome c oxidase subunit VIIa"/>
    <property type="match status" value="1"/>
</dbReference>